<name>EX7L_STAEQ</name>
<keyword id="KW-0963">Cytoplasm</keyword>
<keyword id="KW-0269">Exonuclease</keyword>
<keyword id="KW-0378">Hydrolase</keyword>
<keyword id="KW-0540">Nuclease</keyword>
<keyword id="KW-1185">Reference proteome</keyword>
<evidence type="ECO:0000255" key="1">
    <source>
        <dbReference type="HAMAP-Rule" id="MF_00378"/>
    </source>
</evidence>
<feature type="chain" id="PRO_0000197884" description="Exodeoxyribonuclease 7 large subunit">
    <location>
        <begin position="1"/>
        <end position="445"/>
    </location>
</feature>
<dbReference type="EC" id="3.1.11.6" evidence="1"/>
<dbReference type="EMBL" id="CP000029">
    <property type="protein sequence ID" value="AAW54459.1"/>
    <property type="molecule type" value="Genomic_DNA"/>
</dbReference>
<dbReference type="RefSeq" id="WP_001831186.1">
    <property type="nucleotide sequence ID" value="NC_002976.3"/>
</dbReference>
<dbReference type="SMR" id="Q5HP29"/>
<dbReference type="STRING" id="176279.SERP1084"/>
<dbReference type="GeneID" id="50018678"/>
<dbReference type="KEGG" id="ser:SERP1084"/>
<dbReference type="eggNOG" id="COG1570">
    <property type="taxonomic scope" value="Bacteria"/>
</dbReference>
<dbReference type="HOGENOM" id="CLU_023625_2_0_9"/>
<dbReference type="Proteomes" id="UP000000531">
    <property type="component" value="Chromosome"/>
</dbReference>
<dbReference type="GO" id="GO:0005737">
    <property type="term" value="C:cytoplasm"/>
    <property type="evidence" value="ECO:0007669"/>
    <property type="project" value="UniProtKB-SubCell"/>
</dbReference>
<dbReference type="GO" id="GO:0009318">
    <property type="term" value="C:exodeoxyribonuclease VII complex"/>
    <property type="evidence" value="ECO:0007669"/>
    <property type="project" value="InterPro"/>
</dbReference>
<dbReference type="GO" id="GO:0008855">
    <property type="term" value="F:exodeoxyribonuclease VII activity"/>
    <property type="evidence" value="ECO:0007669"/>
    <property type="project" value="UniProtKB-UniRule"/>
</dbReference>
<dbReference type="GO" id="GO:0003676">
    <property type="term" value="F:nucleic acid binding"/>
    <property type="evidence" value="ECO:0007669"/>
    <property type="project" value="InterPro"/>
</dbReference>
<dbReference type="GO" id="GO:0006308">
    <property type="term" value="P:DNA catabolic process"/>
    <property type="evidence" value="ECO:0007669"/>
    <property type="project" value="UniProtKB-UniRule"/>
</dbReference>
<dbReference type="CDD" id="cd04489">
    <property type="entry name" value="ExoVII_LU_OBF"/>
    <property type="match status" value="1"/>
</dbReference>
<dbReference type="HAMAP" id="MF_00378">
    <property type="entry name" value="Exonuc_7_L"/>
    <property type="match status" value="1"/>
</dbReference>
<dbReference type="InterPro" id="IPR003753">
    <property type="entry name" value="Exonuc_VII_L"/>
</dbReference>
<dbReference type="InterPro" id="IPR020579">
    <property type="entry name" value="Exonuc_VII_lsu_C"/>
</dbReference>
<dbReference type="InterPro" id="IPR025824">
    <property type="entry name" value="OB-fold_nuc-bd_dom"/>
</dbReference>
<dbReference type="NCBIfam" id="TIGR00237">
    <property type="entry name" value="xseA"/>
    <property type="match status" value="1"/>
</dbReference>
<dbReference type="PANTHER" id="PTHR30008">
    <property type="entry name" value="EXODEOXYRIBONUCLEASE 7 LARGE SUBUNIT"/>
    <property type="match status" value="1"/>
</dbReference>
<dbReference type="PANTHER" id="PTHR30008:SF0">
    <property type="entry name" value="EXODEOXYRIBONUCLEASE 7 LARGE SUBUNIT"/>
    <property type="match status" value="1"/>
</dbReference>
<dbReference type="Pfam" id="PF02601">
    <property type="entry name" value="Exonuc_VII_L"/>
    <property type="match status" value="1"/>
</dbReference>
<dbReference type="Pfam" id="PF13742">
    <property type="entry name" value="tRNA_anti_2"/>
    <property type="match status" value="1"/>
</dbReference>
<comment type="function">
    <text evidence="1">Bidirectionally degrades single-stranded DNA into large acid-insoluble oligonucleotides, which are then degraded further into small acid-soluble oligonucleotides.</text>
</comment>
<comment type="catalytic activity">
    <reaction evidence="1">
        <text>Exonucleolytic cleavage in either 5'- to 3'- or 3'- to 5'-direction to yield nucleoside 5'-phosphates.</text>
        <dbReference type="EC" id="3.1.11.6"/>
    </reaction>
</comment>
<comment type="subunit">
    <text evidence="1">Heterooligomer composed of large and small subunits.</text>
</comment>
<comment type="subcellular location">
    <subcellularLocation>
        <location evidence="1">Cytoplasm</location>
    </subcellularLocation>
</comment>
<comment type="similarity">
    <text evidence="1">Belongs to the XseA family.</text>
</comment>
<reference key="1">
    <citation type="journal article" date="2005" name="J. Bacteriol.">
        <title>Insights on evolution of virulence and resistance from the complete genome analysis of an early methicillin-resistant Staphylococcus aureus strain and a biofilm-producing methicillin-resistant Staphylococcus epidermidis strain.</title>
        <authorList>
            <person name="Gill S.R."/>
            <person name="Fouts D.E."/>
            <person name="Archer G.L."/>
            <person name="Mongodin E.F."/>
            <person name="DeBoy R.T."/>
            <person name="Ravel J."/>
            <person name="Paulsen I.T."/>
            <person name="Kolonay J.F."/>
            <person name="Brinkac L.M."/>
            <person name="Beanan M.J."/>
            <person name="Dodson R.J."/>
            <person name="Daugherty S.C."/>
            <person name="Madupu R."/>
            <person name="Angiuoli S.V."/>
            <person name="Durkin A.S."/>
            <person name="Haft D.H."/>
            <person name="Vamathevan J.J."/>
            <person name="Khouri H."/>
            <person name="Utterback T.R."/>
            <person name="Lee C."/>
            <person name="Dimitrov G."/>
            <person name="Jiang L."/>
            <person name="Qin H."/>
            <person name="Weidman J."/>
            <person name="Tran K."/>
            <person name="Kang K.H."/>
            <person name="Hance I.R."/>
            <person name="Nelson K.E."/>
            <person name="Fraser C.M."/>
        </authorList>
    </citation>
    <scope>NUCLEOTIDE SEQUENCE [LARGE SCALE GENOMIC DNA]</scope>
    <source>
        <strain>ATCC 35984 / DSM 28319 / BCRC 17069 / CCUG 31568 / BM 3577 / RP62A</strain>
    </source>
</reference>
<proteinExistence type="inferred from homology"/>
<gene>
    <name evidence="1" type="primary">xseA</name>
    <name type="ordered locus">SERP1084</name>
</gene>
<protein>
    <recommendedName>
        <fullName evidence="1">Exodeoxyribonuclease 7 large subunit</fullName>
        <ecNumber evidence="1">3.1.11.6</ecNumber>
    </recommendedName>
    <alternativeName>
        <fullName evidence="1">Exodeoxyribonuclease VII large subunit</fullName>
        <shortName evidence="1">Exonuclease VII large subunit</shortName>
    </alternativeName>
</protein>
<accession>Q5HP29</accession>
<sequence>MTEYLSVSALTKYIKYKFDQDPHLQSVLIKGELSNFKKHSSGHLYFNVKDKESVISGMMFKGNASKLGFEPKEGDEVLIEARVSVYERRGNYQIYVNKMQLDGIGNLYQKLELLKKKLKKEGYFDQSNKKLIPKYPKKIAVLTASTGAAIRDIHSTINNRYPLVEQIQISTLVQGTQARQDIIEKIQYADSLDVDTIIVGRGGGSIEDLWNFNEEDVVKTIFNCQTPIISAVGHETDFTLSDFVADVRAATPTQAAVIATPDQYELLQQIKQYEYTLSRYIKQYIEHQKKQLNHISSYYKFKQPSLLYDQQIQKRDELERQLNHLLNTKVEKSKHHLKLLQQSFNFKNLNQQITQEKQSIYQLHSRLSKIMSNNITNLKTVLKNKLESLNNLSPTNTMLRGYAIVNKDNEVVTSTHKLNENDQISLTMKDGSVDATVKKVRCNDE</sequence>
<organism>
    <name type="scientific">Staphylococcus epidermidis (strain ATCC 35984 / DSM 28319 / BCRC 17069 / CCUG 31568 / BM 3577 / RP62A)</name>
    <dbReference type="NCBI Taxonomy" id="176279"/>
    <lineage>
        <taxon>Bacteria</taxon>
        <taxon>Bacillati</taxon>
        <taxon>Bacillota</taxon>
        <taxon>Bacilli</taxon>
        <taxon>Bacillales</taxon>
        <taxon>Staphylococcaceae</taxon>
        <taxon>Staphylococcus</taxon>
    </lineage>
</organism>